<proteinExistence type="inferred from homology"/>
<feature type="chain" id="PRO_1000202907" description="3-dehydroquinate synthase">
    <location>
        <begin position="1"/>
        <end position="362"/>
    </location>
</feature>
<feature type="binding site" evidence="1">
    <location>
        <begin position="71"/>
        <end position="76"/>
    </location>
    <ligand>
        <name>NAD(+)</name>
        <dbReference type="ChEBI" id="CHEBI:57540"/>
    </ligand>
</feature>
<feature type="binding site" evidence="1">
    <location>
        <begin position="105"/>
        <end position="109"/>
    </location>
    <ligand>
        <name>NAD(+)</name>
        <dbReference type="ChEBI" id="CHEBI:57540"/>
    </ligand>
</feature>
<feature type="binding site" evidence="1">
    <location>
        <begin position="129"/>
        <end position="130"/>
    </location>
    <ligand>
        <name>NAD(+)</name>
        <dbReference type="ChEBI" id="CHEBI:57540"/>
    </ligand>
</feature>
<feature type="binding site" evidence="1">
    <location>
        <position position="142"/>
    </location>
    <ligand>
        <name>NAD(+)</name>
        <dbReference type="ChEBI" id="CHEBI:57540"/>
    </ligand>
</feature>
<feature type="binding site" evidence="1">
    <location>
        <position position="151"/>
    </location>
    <ligand>
        <name>NAD(+)</name>
        <dbReference type="ChEBI" id="CHEBI:57540"/>
    </ligand>
</feature>
<feature type="binding site" evidence="1">
    <location>
        <begin position="169"/>
        <end position="172"/>
    </location>
    <ligand>
        <name>NAD(+)</name>
        <dbReference type="ChEBI" id="CHEBI:57540"/>
    </ligand>
</feature>
<feature type="binding site" evidence="1">
    <location>
        <position position="184"/>
    </location>
    <ligand>
        <name>Zn(2+)</name>
        <dbReference type="ChEBI" id="CHEBI:29105"/>
    </ligand>
</feature>
<feature type="binding site" evidence="1">
    <location>
        <position position="247"/>
    </location>
    <ligand>
        <name>Zn(2+)</name>
        <dbReference type="ChEBI" id="CHEBI:29105"/>
    </ligand>
</feature>
<feature type="binding site" evidence="1">
    <location>
        <position position="264"/>
    </location>
    <ligand>
        <name>Zn(2+)</name>
        <dbReference type="ChEBI" id="CHEBI:29105"/>
    </ligand>
</feature>
<comment type="function">
    <text evidence="1">Catalyzes the conversion of 3-deoxy-D-arabino-heptulosonate 7-phosphate (DAHP) to dehydroquinate (DHQ).</text>
</comment>
<comment type="catalytic activity">
    <reaction evidence="1">
        <text>7-phospho-2-dehydro-3-deoxy-D-arabino-heptonate = 3-dehydroquinate + phosphate</text>
        <dbReference type="Rhea" id="RHEA:21968"/>
        <dbReference type="ChEBI" id="CHEBI:32364"/>
        <dbReference type="ChEBI" id="CHEBI:43474"/>
        <dbReference type="ChEBI" id="CHEBI:58394"/>
        <dbReference type="EC" id="4.2.3.4"/>
    </reaction>
</comment>
<comment type="cofactor">
    <cofactor evidence="1">
        <name>Co(2+)</name>
        <dbReference type="ChEBI" id="CHEBI:48828"/>
    </cofactor>
    <cofactor evidence="1">
        <name>Zn(2+)</name>
        <dbReference type="ChEBI" id="CHEBI:29105"/>
    </cofactor>
    <text evidence="1">Binds 1 divalent metal cation per subunit. Can use either Co(2+) or Zn(2+).</text>
</comment>
<comment type="cofactor">
    <cofactor evidence="1">
        <name>NAD(+)</name>
        <dbReference type="ChEBI" id="CHEBI:57540"/>
    </cofactor>
</comment>
<comment type="pathway">
    <text evidence="1">Metabolic intermediate biosynthesis; chorismate biosynthesis; chorismate from D-erythrose 4-phosphate and phosphoenolpyruvate: step 2/7.</text>
</comment>
<comment type="subcellular location">
    <subcellularLocation>
        <location evidence="1">Cytoplasm</location>
    </subcellularLocation>
</comment>
<comment type="similarity">
    <text evidence="1">Belongs to the sugar phosphate cyclases superfamily. Dehydroquinate synthase family.</text>
</comment>
<keyword id="KW-0028">Amino-acid biosynthesis</keyword>
<keyword id="KW-0057">Aromatic amino acid biosynthesis</keyword>
<keyword id="KW-0170">Cobalt</keyword>
<keyword id="KW-0963">Cytoplasm</keyword>
<keyword id="KW-0456">Lyase</keyword>
<keyword id="KW-0479">Metal-binding</keyword>
<keyword id="KW-0520">NAD</keyword>
<keyword id="KW-0547">Nucleotide-binding</keyword>
<keyword id="KW-0862">Zinc</keyword>
<dbReference type="EC" id="4.2.3.4" evidence="1"/>
<dbReference type="EMBL" id="CP001396">
    <property type="protein sequence ID" value="ACR61805.1"/>
    <property type="molecule type" value="Genomic_DNA"/>
</dbReference>
<dbReference type="RefSeq" id="WP_000439848.1">
    <property type="nucleotide sequence ID" value="NC_012759.1"/>
</dbReference>
<dbReference type="SMR" id="C4ZUP4"/>
<dbReference type="KEGG" id="ebw:BWG_3080"/>
<dbReference type="HOGENOM" id="CLU_001201_0_2_6"/>
<dbReference type="UniPathway" id="UPA00053">
    <property type="reaction ID" value="UER00085"/>
</dbReference>
<dbReference type="GO" id="GO:0005737">
    <property type="term" value="C:cytoplasm"/>
    <property type="evidence" value="ECO:0007669"/>
    <property type="project" value="UniProtKB-SubCell"/>
</dbReference>
<dbReference type="GO" id="GO:0003856">
    <property type="term" value="F:3-dehydroquinate synthase activity"/>
    <property type="evidence" value="ECO:0007669"/>
    <property type="project" value="UniProtKB-UniRule"/>
</dbReference>
<dbReference type="GO" id="GO:0046872">
    <property type="term" value="F:metal ion binding"/>
    <property type="evidence" value="ECO:0007669"/>
    <property type="project" value="UniProtKB-KW"/>
</dbReference>
<dbReference type="GO" id="GO:0000166">
    <property type="term" value="F:nucleotide binding"/>
    <property type="evidence" value="ECO:0007669"/>
    <property type="project" value="UniProtKB-KW"/>
</dbReference>
<dbReference type="GO" id="GO:0008652">
    <property type="term" value="P:amino acid biosynthetic process"/>
    <property type="evidence" value="ECO:0007669"/>
    <property type="project" value="UniProtKB-KW"/>
</dbReference>
<dbReference type="GO" id="GO:0009073">
    <property type="term" value="P:aromatic amino acid family biosynthetic process"/>
    <property type="evidence" value="ECO:0007669"/>
    <property type="project" value="UniProtKB-KW"/>
</dbReference>
<dbReference type="GO" id="GO:0009423">
    <property type="term" value="P:chorismate biosynthetic process"/>
    <property type="evidence" value="ECO:0007669"/>
    <property type="project" value="UniProtKB-UniRule"/>
</dbReference>
<dbReference type="CDD" id="cd08195">
    <property type="entry name" value="DHQS"/>
    <property type="match status" value="1"/>
</dbReference>
<dbReference type="FunFam" id="1.20.1090.10:FF:000002">
    <property type="entry name" value="3-dehydroquinate synthase"/>
    <property type="match status" value="1"/>
</dbReference>
<dbReference type="FunFam" id="3.40.50.1970:FF:000001">
    <property type="entry name" value="3-dehydroquinate synthase"/>
    <property type="match status" value="1"/>
</dbReference>
<dbReference type="Gene3D" id="3.40.50.1970">
    <property type="match status" value="1"/>
</dbReference>
<dbReference type="Gene3D" id="1.20.1090.10">
    <property type="entry name" value="Dehydroquinate synthase-like - alpha domain"/>
    <property type="match status" value="1"/>
</dbReference>
<dbReference type="HAMAP" id="MF_00110">
    <property type="entry name" value="DHQ_synthase"/>
    <property type="match status" value="1"/>
</dbReference>
<dbReference type="InterPro" id="IPR050071">
    <property type="entry name" value="Dehydroquinate_synthase"/>
</dbReference>
<dbReference type="InterPro" id="IPR016037">
    <property type="entry name" value="DHQ_synth_AroB"/>
</dbReference>
<dbReference type="InterPro" id="IPR030963">
    <property type="entry name" value="DHQ_synth_fam"/>
</dbReference>
<dbReference type="InterPro" id="IPR030960">
    <property type="entry name" value="DHQS/DOIS_N"/>
</dbReference>
<dbReference type="InterPro" id="IPR056179">
    <property type="entry name" value="DHQS_C"/>
</dbReference>
<dbReference type="NCBIfam" id="TIGR01357">
    <property type="entry name" value="aroB"/>
    <property type="match status" value="1"/>
</dbReference>
<dbReference type="PANTHER" id="PTHR43622">
    <property type="entry name" value="3-DEHYDROQUINATE SYNTHASE"/>
    <property type="match status" value="1"/>
</dbReference>
<dbReference type="PANTHER" id="PTHR43622:SF7">
    <property type="entry name" value="3-DEHYDROQUINATE SYNTHASE, CHLOROPLASTIC"/>
    <property type="match status" value="1"/>
</dbReference>
<dbReference type="Pfam" id="PF01761">
    <property type="entry name" value="DHQ_synthase"/>
    <property type="match status" value="1"/>
</dbReference>
<dbReference type="Pfam" id="PF24621">
    <property type="entry name" value="DHQS_C"/>
    <property type="match status" value="1"/>
</dbReference>
<dbReference type="PIRSF" id="PIRSF001455">
    <property type="entry name" value="DHQ_synth"/>
    <property type="match status" value="1"/>
</dbReference>
<dbReference type="SUPFAM" id="SSF56796">
    <property type="entry name" value="Dehydroquinate synthase-like"/>
    <property type="match status" value="1"/>
</dbReference>
<protein>
    <recommendedName>
        <fullName evidence="1">3-dehydroquinate synthase</fullName>
        <shortName evidence="1">DHQS</shortName>
        <ecNumber evidence="1">4.2.3.4</ecNumber>
    </recommendedName>
</protein>
<reference key="1">
    <citation type="journal article" date="2009" name="J. Bacteriol.">
        <title>Genomic sequencing reveals regulatory mutations and recombinational events in the widely used MC4100 lineage of Escherichia coli K-12.</title>
        <authorList>
            <person name="Ferenci T."/>
            <person name="Zhou Z."/>
            <person name="Betteridge T."/>
            <person name="Ren Y."/>
            <person name="Liu Y."/>
            <person name="Feng L."/>
            <person name="Reeves P.R."/>
            <person name="Wang L."/>
        </authorList>
    </citation>
    <scope>NUCLEOTIDE SEQUENCE [LARGE SCALE GENOMIC DNA]</scope>
    <source>
        <strain>K12 / MC4100 / BW2952</strain>
    </source>
</reference>
<organism>
    <name type="scientific">Escherichia coli (strain K12 / MC4100 / BW2952)</name>
    <dbReference type="NCBI Taxonomy" id="595496"/>
    <lineage>
        <taxon>Bacteria</taxon>
        <taxon>Pseudomonadati</taxon>
        <taxon>Pseudomonadota</taxon>
        <taxon>Gammaproteobacteria</taxon>
        <taxon>Enterobacterales</taxon>
        <taxon>Enterobacteriaceae</taxon>
        <taxon>Escherichia</taxon>
    </lineage>
</organism>
<evidence type="ECO:0000255" key="1">
    <source>
        <dbReference type="HAMAP-Rule" id="MF_00110"/>
    </source>
</evidence>
<name>AROB_ECOBW</name>
<accession>C4ZUP4</accession>
<gene>
    <name evidence="1" type="primary">aroB</name>
    <name type="ordered locus">BWG_3080</name>
</gene>
<sequence>MERIVVTLGERSYPITIASGLFNEPASFLPLKSGEQVMLVTNETLAPLYLDKVRGVLEQAGVNVDSVILPDGEQYKSLAVLDTVFTALLQKPHGRDTTLVALGGGVVGDLTGFAAASYQRGVRFIQVPTTLLSQVDSSVGGKTAVNHPLGKNMIGAFYQPASVVVDLDCLKTLPPRELASGLAEVIKYGIILDGAFFNWLEENLDALLRLDGPAMAYCIRRCCELKAEVVAADERETGLRALLNLGHTFGHAIEAEMGYGNWLHGEAVAAGMVMAARTSERLGQFSSAETQRIITLLKRAGLPVNGPREMSAQAYLPHMLRDKKVLAGEMRLILPLAIGKSEVRSGVSHELVLNAIADCQSA</sequence>